<keyword id="KW-0067">ATP-binding</keyword>
<keyword id="KW-0315">Glutamine amidotransferase</keyword>
<keyword id="KW-0436">Ligase</keyword>
<keyword id="KW-0460">Magnesium</keyword>
<keyword id="KW-0479">Metal-binding</keyword>
<keyword id="KW-0547">Nucleotide-binding</keyword>
<keyword id="KW-0665">Pyrimidine biosynthesis</keyword>
<comment type="function">
    <text evidence="1">Catalyzes the ATP-dependent amination of UTP to CTP with either L-glutamine or ammonia as the source of nitrogen. Regulates intracellular CTP levels through interactions with the four ribonucleotide triphosphates.</text>
</comment>
<comment type="catalytic activity">
    <reaction evidence="1">
        <text>UTP + L-glutamine + ATP + H2O = CTP + L-glutamate + ADP + phosphate + 2 H(+)</text>
        <dbReference type="Rhea" id="RHEA:26426"/>
        <dbReference type="ChEBI" id="CHEBI:15377"/>
        <dbReference type="ChEBI" id="CHEBI:15378"/>
        <dbReference type="ChEBI" id="CHEBI:29985"/>
        <dbReference type="ChEBI" id="CHEBI:30616"/>
        <dbReference type="ChEBI" id="CHEBI:37563"/>
        <dbReference type="ChEBI" id="CHEBI:43474"/>
        <dbReference type="ChEBI" id="CHEBI:46398"/>
        <dbReference type="ChEBI" id="CHEBI:58359"/>
        <dbReference type="ChEBI" id="CHEBI:456216"/>
        <dbReference type="EC" id="6.3.4.2"/>
    </reaction>
</comment>
<comment type="catalytic activity">
    <reaction evidence="1">
        <text>L-glutamine + H2O = L-glutamate + NH4(+)</text>
        <dbReference type="Rhea" id="RHEA:15889"/>
        <dbReference type="ChEBI" id="CHEBI:15377"/>
        <dbReference type="ChEBI" id="CHEBI:28938"/>
        <dbReference type="ChEBI" id="CHEBI:29985"/>
        <dbReference type="ChEBI" id="CHEBI:58359"/>
    </reaction>
</comment>
<comment type="catalytic activity">
    <reaction evidence="1">
        <text>UTP + NH4(+) + ATP = CTP + ADP + phosphate + 2 H(+)</text>
        <dbReference type="Rhea" id="RHEA:16597"/>
        <dbReference type="ChEBI" id="CHEBI:15378"/>
        <dbReference type="ChEBI" id="CHEBI:28938"/>
        <dbReference type="ChEBI" id="CHEBI:30616"/>
        <dbReference type="ChEBI" id="CHEBI:37563"/>
        <dbReference type="ChEBI" id="CHEBI:43474"/>
        <dbReference type="ChEBI" id="CHEBI:46398"/>
        <dbReference type="ChEBI" id="CHEBI:456216"/>
    </reaction>
</comment>
<comment type="activity regulation">
    <text evidence="1">Allosterically activated by GTP, when glutamine is the substrate; GTP has no effect on the reaction when ammonia is the substrate. The allosteric effector GTP functions by stabilizing the protein conformation that binds the tetrahedral intermediate(s) formed during glutamine hydrolysis. Inhibited by the product CTP, via allosteric rather than competitive inhibition.</text>
</comment>
<comment type="pathway">
    <text evidence="1">Pyrimidine metabolism; CTP biosynthesis via de novo pathway; CTP from UDP: step 2/2.</text>
</comment>
<comment type="subunit">
    <text evidence="1">Homotetramer.</text>
</comment>
<comment type="miscellaneous">
    <text evidence="1">CTPSs have evolved a hybrid strategy for distinguishing between UTP and CTP. The overlapping regions of the product feedback inhibitory and substrate sites recognize a common feature in both compounds, the triphosphate moiety. To differentiate isosteric substrate and product pyrimidine rings, an additional pocket far from the expected kinase/ligase catalytic site, specifically recognizes the cytosine and ribose portions of the product inhibitor.</text>
</comment>
<comment type="similarity">
    <text evidence="1">Belongs to the CTP synthase family.</text>
</comment>
<protein>
    <recommendedName>
        <fullName evidence="1">CTP synthase</fullName>
        <ecNumber evidence="1">6.3.4.2</ecNumber>
    </recommendedName>
    <alternativeName>
        <fullName evidence="1">Cytidine 5'-triphosphate synthase</fullName>
    </alternativeName>
    <alternativeName>
        <fullName evidence="1">Cytidine triphosphate synthetase</fullName>
        <shortName evidence="1">CTP synthetase</shortName>
        <shortName evidence="1">CTPS</shortName>
    </alternativeName>
    <alternativeName>
        <fullName evidence="1">UTP--ammonia ligase</fullName>
    </alternativeName>
</protein>
<organism>
    <name type="scientific">Legionella pneumophila (strain Corby)</name>
    <dbReference type="NCBI Taxonomy" id="400673"/>
    <lineage>
        <taxon>Bacteria</taxon>
        <taxon>Pseudomonadati</taxon>
        <taxon>Pseudomonadota</taxon>
        <taxon>Gammaproteobacteria</taxon>
        <taxon>Legionellales</taxon>
        <taxon>Legionellaceae</taxon>
        <taxon>Legionella</taxon>
    </lineage>
</organism>
<feature type="chain" id="PRO_1000139480" description="CTP synthase">
    <location>
        <begin position="1"/>
        <end position="545"/>
    </location>
</feature>
<feature type="domain" description="Glutamine amidotransferase type-1" evidence="1">
    <location>
        <begin position="290"/>
        <end position="541"/>
    </location>
</feature>
<feature type="region of interest" description="Amidoligase domain" evidence="1">
    <location>
        <begin position="1"/>
        <end position="265"/>
    </location>
</feature>
<feature type="active site" description="Nucleophile; for glutamine hydrolysis" evidence="1">
    <location>
        <position position="378"/>
    </location>
</feature>
<feature type="active site" evidence="1">
    <location>
        <position position="514"/>
    </location>
</feature>
<feature type="active site" evidence="1">
    <location>
        <position position="516"/>
    </location>
</feature>
<feature type="binding site" evidence="1">
    <location>
        <position position="13"/>
    </location>
    <ligand>
        <name>CTP</name>
        <dbReference type="ChEBI" id="CHEBI:37563"/>
        <note>allosteric inhibitor</note>
    </ligand>
</feature>
<feature type="binding site" evidence="1">
    <location>
        <position position="13"/>
    </location>
    <ligand>
        <name>UTP</name>
        <dbReference type="ChEBI" id="CHEBI:46398"/>
    </ligand>
</feature>
<feature type="binding site" evidence="1">
    <location>
        <begin position="14"/>
        <end position="19"/>
    </location>
    <ligand>
        <name>ATP</name>
        <dbReference type="ChEBI" id="CHEBI:30616"/>
    </ligand>
</feature>
<feature type="binding site" evidence="1">
    <location>
        <position position="71"/>
    </location>
    <ligand>
        <name>ATP</name>
        <dbReference type="ChEBI" id="CHEBI:30616"/>
    </ligand>
</feature>
<feature type="binding site" evidence="1">
    <location>
        <position position="71"/>
    </location>
    <ligand>
        <name>Mg(2+)</name>
        <dbReference type="ChEBI" id="CHEBI:18420"/>
    </ligand>
</feature>
<feature type="binding site" evidence="1">
    <location>
        <position position="139"/>
    </location>
    <ligand>
        <name>Mg(2+)</name>
        <dbReference type="ChEBI" id="CHEBI:18420"/>
    </ligand>
</feature>
<feature type="binding site" evidence="1">
    <location>
        <begin position="146"/>
        <end position="148"/>
    </location>
    <ligand>
        <name>CTP</name>
        <dbReference type="ChEBI" id="CHEBI:37563"/>
        <note>allosteric inhibitor</note>
    </ligand>
</feature>
<feature type="binding site" evidence="1">
    <location>
        <begin position="186"/>
        <end position="191"/>
    </location>
    <ligand>
        <name>CTP</name>
        <dbReference type="ChEBI" id="CHEBI:37563"/>
        <note>allosteric inhibitor</note>
    </ligand>
</feature>
<feature type="binding site" evidence="1">
    <location>
        <begin position="186"/>
        <end position="191"/>
    </location>
    <ligand>
        <name>UTP</name>
        <dbReference type="ChEBI" id="CHEBI:46398"/>
    </ligand>
</feature>
<feature type="binding site" evidence="1">
    <location>
        <position position="222"/>
    </location>
    <ligand>
        <name>CTP</name>
        <dbReference type="ChEBI" id="CHEBI:37563"/>
        <note>allosteric inhibitor</note>
    </ligand>
</feature>
<feature type="binding site" evidence="1">
    <location>
        <position position="222"/>
    </location>
    <ligand>
        <name>UTP</name>
        <dbReference type="ChEBI" id="CHEBI:46398"/>
    </ligand>
</feature>
<feature type="binding site" evidence="1">
    <location>
        <position position="351"/>
    </location>
    <ligand>
        <name>L-glutamine</name>
        <dbReference type="ChEBI" id="CHEBI:58359"/>
    </ligand>
</feature>
<feature type="binding site" evidence="1">
    <location>
        <begin position="379"/>
        <end position="382"/>
    </location>
    <ligand>
        <name>L-glutamine</name>
        <dbReference type="ChEBI" id="CHEBI:58359"/>
    </ligand>
</feature>
<feature type="binding site" evidence="1">
    <location>
        <position position="402"/>
    </location>
    <ligand>
        <name>L-glutamine</name>
        <dbReference type="ChEBI" id="CHEBI:58359"/>
    </ligand>
</feature>
<feature type="binding site" evidence="1">
    <location>
        <position position="469"/>
    </location>
    <ligand>
        <name>L-glutamine</name>
        <dbReference type="ChEBI" id="CHEBI:58359"/>
    </ligand>
</feature>
<gene>
    <name evidence="1" type="primary">pyrG</name>
    <name type="ordered locus">LPC_0648</name>
</gene>
<reference key="1">
    <citation type="submission" date="2006-11" db="EMBL/GenBank/DDBJ databases">
        <title>Identification and characterization of a new conjugation/ type IVA secretion system (trb/tra) of L. pneumophila Corby localized on a mobile genomic island.</title>
        <authorList>
            <person name="Gloeckner G."/>
            <person name="Albert-Weissenberger C."/>
            <person name="Weinmann E."/>
            <person name="Jacobi S."/>
            <person name="Schunder E."/>
            <person name="Steinert M."/>
            <person name="Buchrieser C."/>
            <person name="Hacker J."/>
            <person name="Heuner K."/>
        </authorList>
    </citation>
    <scope>NUCLEOTIDE SEQUENCE [LARGE SCALE GENOMIC DNA]</scope>
    <source>
        <strain>Corby</strain>
    </source>
</reference>
<dbReference type="EC" id="6.3.4.2" evidence="1"/>
<dbReference type="EMBL" id="CP000675">
    <property type="protein sequence ID" value="ABQ54629.1"/>
    <property type="molecule type" value="Genomic_DNA"/>
</dbReference>
<dbReference type="RefSeq" id="WP_010946915.1">
    <property type="nucleotide sequence ID" value="NZ_JAPMSS010000002.1"/>
</dbReference>
<dbReference type="SMR" id="A5IB79"/>
<dbReference type="MEROPS" id="C26.964"/>
<dbReference type="KEGG" id="lpc:LPC_0648"/>
<dbReference type="HOGENOM" id="CLU_011675_5_0_6"/>
<dbReference type="UniPathway" id="UPA00159">
    <property type="reaction ID" value="UER00277"/>
</dbReference>
<dbReference type="GO" id="GO:0005829">
    <property type="term" value="C:cytosol"/>
    <property type="evidence" value="ECO:0007669"/>
    <property type="project" value="TreeGrafter"/>
</dbReference>
<dbReference type="GO" id="GO:0005524">
    <property type="term" value="F:ATP binding"/>
    <property type="evidence" value="ECO:0007669"/>
    <property type="project" value="UniProtKB-KW"/>
</dbReference>
<dbReference type="GO" id="GO:0003883">
    <property type="term" value="F:CTP synthase activity"/>
    <property type="evidence" value="ECO:0007669"/>
    <property type="project" value="UniProtKB-UniRule"/>
</dbReference>
<dbReference type="GO" id="GO:0004359">
    <property type="term" value="F:glutaminase activity"/>
    <property type="evidence" value="ECO:0007669"/>
    <property type="project" value="RHEA"/>
</dbReference>
<dbReference type="GO" id="GO:0042802">
    <property type="term" value="F:identical protein binding"/>
    <property type="evidence" value="ECO:0007669"/>
    <property type="project" value="TreeGrafter"/>
</dbReference>
<dbReference type="GO" id="GO:0046872">
    <property type="term" value="F:metal ion binding"/>
    <property type="evidence" value="ECO:0007669"/>
    <property type="project" value="UniProtKB-KW"/>
</dbReference>
<dbReference type="GO" id="GO:0044210">
    <property type="term" value="P:'de novo' CTP biosynthetic process"/>
    <property type="evidence" value="ECO:0007669"/>
    <property type="project" value="UniProtKB-UniRule"/>
</dbReference>
<dbReference type="GO" id="GO:0019856">
    <property type="term" value="P:pyrimidine nucleobase biosynthetic process"/>
    <property type="evidence" value="ECO:0007669"/>
    <property type="project" value="TreeGrafter"/>
</dbReference>
<dbReference type="CDD" id="cd03113">
    <property type="entry name" value="CTPS_N"/>
    <property type="match status" value="1"/>
</dbReference>
<dbReference type="CDD" id="cd01746">
    <property type="entry name" value="GATase1_CTP_Synthase"/>
    <property type="match status" value="1"/>
</dbReference>
<dbReference type="FunFam" id="3.40.50.300:FF:000009">
    <property type="entry name" value="CTP synthase"/>
    <property type="match status" value="1"/>
</dbReference>
<dbReference type="FunFam" id="3.40.50.880:FF:000002">
    <property type="entry name" value="CTP synthase"/>
    <property type="match status" value="1"/>
</dbReference>
<dbReference type="Gene3D" id="3.40.50.880">
    <property type="match status" value="1"/>
</dbReference>
<dbReference type="Gene3D" id="3.40.50.300">
    <property type="entry name" value="P-loop containing nucleotide triphosphate hydrolases"/>
    <property type="match status" value="1"/>
</dbReference>
<dbReference type="HAMAP" id="MF_01227">
    <property type="entry name" value="PyrG"/>
    <property type="match status" value="1"/>
</dbReference>
<dbReference type="InterPro" id="IPR029062">
    <property type="entry name" value="Class_I_gatase-like"/>
</dbReference>
<dbReference type="InterPro" id="IPR004468">
    <property type="entry name" value="CTP_synthase"/>
</dbReference>
<dbReference type="InterPro" id="IPR017456">
    <property type="entry name" value="CTP_synthase_N"/>
</dbReference>
<dbReference type="InterPro" id="IPR017926">
    <property type="entry name" value="GATASE"/>
</dbReference>
<dbReference type="InterPro" id="IPR033828">
    <property type="entry name" value="GATase1_CTP_Synthase"/>
</dbReference>
<dbReference type="InterPro" id="IPR027417">
    <property type="entry name" value="P-loop_NTPase"/>
</dbReference>
<dbReference type="NCBIfam" id="NF003792">
    <property type="entry name" value="PRK05380.1"/>
    <property type="match status" value="1"/>
</dbReference>
<dbReference type="NCBIfam" id="TIGR00337">
    <property type="entry name" value="PyrG"/>
    <property type="match status" value="1"/>
</dbReference>
<dbReference type="PANTHER" id="PTHR11550">
    <property type="entry name" value="CTP SYNTHASE"/>
    <property type="match status" value="1"/>
</dbReference>
<dbReference type="PANTHER" id="PTHR11550:SF0">
    <property type="entry name" value="CTP SYNTHASE-RELATED"/>
    <property type="match status" value="1"/>
</dbReference>
<dbReference type="Pfam" id="PF06418">
    <property type="entry name" value="CTP_synth_N"/>
    <property type="match status" value="1"/>
</dbReference>
<dbReference type="Pfam" id="PF00117">
    <property type="entry name" value="GATase"/>
    <property type="match status" value="1"/>
</dbReference>
<dbReference type="SUPFAM" id="SSF52317">
    <property type="entry name" value="Class I glutamine amidotransferase-like"/>
    <property type="match status" value="1"/>
</dbReference>
<dbReference type="SUPFAM" id="SSF52540">
    <property type="entry name" value="P-loop containing nucleoside triphosphate hydrolases"/>
    <property type="match status" value="1"/>
</dbReference>
<dbReference type="PROSITE" id="PS51273">
    <property type="entry name" value="GATASE_TYPE_1"/>
    <property type="match status" value="1"/>
</dbReference>
<name>PYRG_LEGPC</name>
<sequence length="545" mass="60720">MTKYIFITGGVVSSLGKGIAAASLAAILEARGLRVTLIKLDPYINVDPGTMSPFQHGEVFVTNDGAETDLDLGHYERFVKTTMTKRNNFTSGKIYENVIKKERRGDYLGGTVQVIPHITNEIKRCIKLGADAFDVAMVEIGGTVGDIESLPFLEAIRQMRIELGSQRAIFIHLTLVPYIATSGETKTKPTQHSVKELRSIGIQPDVLICRSEKPLSMADRAKIALFTNVEKEAVISLEDANSIYQIPMILHAQHLDEIVVKKLSLEAKQADLSEWQRVVDMQAVQTMTVKIAMVGKYTELNDAYKSINEALLHAGIHTETKVEIIYFDAEMIEKHGALLLESIDAILVPGGFGERGVEGKIKAIQYAREHKVPFLGICLGMQTAVIEFARNVVGLTGANSTEFNKETLYPVLGLISEWMDADGSKQIRDENTDLGGTMRLGGQYCHLAEGTLARKVYGKPQIIERHRHRYEVNNKYVDSLVKHGLIISGRSADNSLVEMIELADHPWFLACQFHPEFTSNPRDSHPLFKEFVLAARIHHQEKDKK</sequence>
<evidence type="ECO:0000255" key="1">
    <source>
        <dbReference type="HAMAP-Rule" id="MF_01227"/>
    </source>
</evidence>
<proteinExistence type="inferred from homology"/>
<accession>A5IB79</accession>